<evidence type="ECO:0000250" key="1"/>
<evidence type="ECO:0000255" key="2"/>
<evidence type="ECO:0000305" key="3"/>
<protein>
    <recommendedName>
        <fullName>Metal tolerance protein B</fullName>
        <shortName>AtMTP4</shortName>
        <shortName>AtMTPb</shortName>
    </recommendedName>
</protein>
<dbReference type="EMBL" id="AC004561">
    <property type="protein sequence ID" value="AAC95197.1"/>
    <property type="status" value="ALT_INIT"/>
    <property type="molecule type" value="Genomic_DNA"/>
</dbReference>
<dbReference type="EMBL" id="CP002685">
    <property type="protein sequence ID" value="AEC08251.1"/>
    <property type="molecule type" value="Genomic_DNA"/>
</dbReference>
<dbReference type="EMBL" id="BT014994">
    <property type="protein sequence ID" value="AAT70445.1"/>
    <property type="molecule type" value="mRNA"/>
</dbReference>
<dbReference type="EMBL" id="BT015899">
    <property type="protein sequence ID" value="AAU95435.1"/>
    <property type="molecule type" value="mRNA"/>
</dbReference>
<dbReference type="PIR" id="A84696">
    <property type="entry name" value="A84696"/>
</dbReference>
<dbReference type="RefSeq" id="NP_180502.2">
    <property type="nucleotide sequence ID" value="NM_128495.4"/>
</dbReference>
<dbReference type="SMR" id="Q6DBM8"/>
<dbReference type="BioGRID" id="2840">
    <property type="interactions" value="22"/>
</dbReference>
<dbReference type="FunCoup" id="Q6DBM8">
    <property type="interactions" value="164"/>
</dbReference>
<dbReference type="IntAct" id="Q6DBM8">
    <property type="interactions" value="22"/>
</dbReference>
<dbReference type="STRING" id="3702.Q6DBM8"/>
<dbReference type="PaxDb" id="3702-AT2G29410.1"/>
<dbReference type="ProteomicsDB" id="251408"/>
<dbReference type="EnsemblPlants" id="AT2G29410.1">
    <property type="protein sequence ID" value="AT2G29410.1"/>
    <property type="gene ID" value="AT2G29410"/>
</dbReference>
<dbReference type="GeneID" id="817490"/>
<dbReference type="Gramene" id="AT2G29410.1">
    <property type="protein sequence ID" value="AT2G29410.1"/>
    <property type="gene ID" value="AT2G29410"/>
</dbReference>
<dbReference type="KEGG" id="ath:AT2G29410"/>
<dbReference type="Araport" id="AT2G29410"/>
<dbReference type="TAIR" id="AT2G29410">
    <property type="gene designation" value="MTPB1"/>
</dbReference>
<dbReference type="eggNOG" id="KOG1482">
    <property type="taxonomic scope" value="Eukaryota"/>
</dbReference>
<dbReference type="HOGENOM" id="CLU_013430_0_1_1"/>
<dbReference type="InParanoid" id="Q6DBM8"/>
<dbReference type="OMA" id="RTWGWAR"/>
<dbReference type="PhylomeDB" id="Q6DBM8"/>
<dbReference type="PRO" id="PR:Q6DBM8"/>
<dbReference type="Proteomes" id="UP000006548">
    <property type="component" value="Chromosome 2"/>
</dbReference>
<dbReference type="ExpressionAtlas" id="Q6DBM8">
    <property type="expression patterns" value="baseline and differential"/>
</dbReference>
<dbReference type="GO" id="GO:0005774">
    <property type="term" value="C:vacuolar membrane"/>
    <property type="evidence" value="ECO:0007669"/>
    <property type="project" value="UniProtKB-SubCell"/>
</dbReference>
<dbReference type="GO" id="GO:0046872">
    <property type="term" value="F:metal ion binding"/>
    <property type="evidence" value="ECO:0007669"/>
    <property type="project" value="UniProtKB-KW"/>
</dbReference>
<dbReference type="GO" id="GO:0008324">
    <property type="term" value="F:monoatomic cation transmembrane transporter activity"/>
    <property type="evidence" value="ECO:0007669"/>
    <property type="project" value="InterPro"/>
</dbReference>
<dbReference type="GO" id="GO:0006829">
    <property type="term" value="P:zinc ion transport"/>
    <property type="evidence" value="ECO:0007669"/>
    <property type="project" value="UniProtKB-KW"/>
</dbReference>
<dbReference type="Gene3D" id="1.20.1510.10">
    <property type="entry name" value="Cation efflux protein transmembrane domain"/>
    <property type="match status" value="1"/>
</dbReference>
<dbReference type="InterPro" id="IPR002524">
    <property type="entry name" value="Cation_efflux"/>
</dbReference>
<dbReference type="InterPro" id="IPR036837">
    <property type="entry name" value="Cation_efflux_CTD_sf"/>
</dbReference>
<dbReference type="InterPro" id="IPR027469">
    <property type="entry name" value="Cation_efflux_TMD_sf"/>
</dbReference>
<dbReference type="InterPro" id="IPR050681">
    <property type="entry name" value="CDF/SLC30A"/>
</dbReference>
<dbReference type="NCBIfam" id="TIGR01297">
    <property type="entry name" value="CDF"/>
    <property type="match status" value="1"/>
</dbReference>
<dbReference type="PANTHER" id="PTHR11562">
    <property type="entry name" value="CATION EFFLUX PROTEIN/ ZINC TRANSPORTER"/>
    <property type="match status" value="1"/>
</dbReference>
<dbReference type="PANTHER" id="PTHR11562:SF101">
    <property type="entry name" value="METAL TOLERANCE PROTEIN B"/>
    <property type="match status" value="1"/>
</dbReference>
<dbReference type="Pfam" id="PF01545">
    <property type="entry name" value="Cation_efflux"/>
    <property type="match status" value="1"/>
</dbReference>
<dbReference type="SUPFAM" id="SSF160240">
    <property type="entry name" value="Cation efflux protein cytoplasmic domain-like"/>
    <property type="match status" value="1"/>
</dbReference>
<dbReference type="SUPFAM" id="SSF161111">
    <property type="entry name" value="Cation efflux protein transmembrane domain-like"/>
    <property type="match status" value="1"/>
</dbReference>
<comment type="function">
    <text evidence="1">Involved in sequestration of excess zinc in the cytoplasm into vacuoles to maintain zinc homeostasis.</text>
</comment>
<comment type="subcellular location">
    <subcellularLocation>
        <location evidence="1">Vacuole membrane</location>
        <topology evidence="1">Multi-pass membrane protein</topology>
    </subcellularLocation>
    <text>Tonoplast.</text>
</comment>
<comment type="similarity">
    <text evidence="3">Belongs to the cation diffusion facilitator (CDF) transporter (TC 2.A.4) family. SLC30A subfamily.</text>
</comment>
<comment type="sequence caution" evidence="3">
    <conflict type="erroneous initiation">
        <sequence resource="EMBL-CDS" id="AAC95197"/>
    </conflict>
</comment>
<keyword id="KW-0406">Ion transport</keyword>
<keyword id="KW-0472">Membrane</keyword>
<keyword id="KW-0479">Metal-binding</keyword>
<keyword id="KW-1185">Reference proteome</keyword>
<keyword id="KW-0812">Transmembrane</keyword>
<keyword id="KW-1133">Transmembrane helix</keyword>
<keyword id="KW-0813">Transport</keyword>
<keyword id="KW-0926">Vacuole</keyword>
<keyword id="KW-0862">Zinc</keyword>
<keyword id="KW-0864">Zinc transport</keyword>
<accession>Q6DBM8</accession>
<accession>Q9ZW23</accession>
<organism>
    <name type="scientific">Arabidopsis thaliana</name>
    <name type="common">Mouse-ear cress</name>
    <dbReference type="NCBI Taxonomy" id="3702"/>
    <lineage>
        <taxon>Eukaryota</taxon>
        <taxon>Viridiplantae</taxon>
        <taxon>Streptophyta</taxon>
        <taxon>Embryophyta</taxon>
        <taxon>Tracheophyta</taxon>
        <taxon>Spermatophyta</taxon>
        <taxon>Magnoliopsida</taxon>
        <taxon>eudicotyledons</taxon>
        <taxon>Gunneridae</taxon>
        <taxon>Pentapetalae</taxon>
        <taxon>rosids</taxon>
        <taxon>malvids</taxon>
        <taxon>Brassicales</taxon>
        <taxon>Brassicaceae</taxon>
        <taxon>Camelineae</taxon>
        <taxon>Arabidopsis</taxon>
    </lineage>
</organism>
<proteinExistence type="evidence at transcript level"/>
<gene>
    <name type="primary">MTPB</name>
    <name type="synonym">MTP4</name>
    <name type="ordered locus">At2g29410</name>
    <name type="ORF">F16P2.21</name>
</gene>
<name>MTPB_ARATH</name>
<sequence>MELEQICILKPDDEEEMESPSPSKTEENLGVVPLSCAFTRQEHCVSETKEREESTRRLSSLIFLYLIVMSVQIVGGFKANSLAVMTDAAHLLSDVAGLCVSLLAIKVSSWEANPRNSFGFKRLEVLAAFLSVQLIWLVSGVIIHEAIQRLLSRSREVNGEIMFGISAFGFFMNLVMVLWLGHNHSHHHHDHHHHHHNHKHQHQHHHKEVVAEEEEEEMNPLKGEKSSSKEMNINIQGAYLHAMADMIQSLGVMIGGGIIWVKPKWVLVDLICTLVFSAFALAATLPILKNIFGILMERVPRDMDIEKLERGLKRIDGVKIVYDLHVWEITVGRIVLSCHILPEPGASPKEIITGVRNFCRKSYGIYHATVQVESE</sequence>
<reference key="1">
    <citation type="journal article" date="1999" name="Nature">
        <title>Sequence and analysis of chromosome 2 of the plant Arabidopsis thaliana.</title>
        <authorList>
            <person name="Lin X."/>
            <person name="Kaul S."/>
            <person name="Rounsley S.D."/>
            <person name="Shea T.P."/>
            <person name="Benito M.-I."/>
            <person name="Town C.D."/>
            <person name="Fujii C.Y."/>
            <person name="Mason T.M."/>
            <person name="Bowman C.L."/>
            <person name="Barnstead M.E."/>
            <person name="Feldblyum T.V."/>
            <person name="Buell C.R."/>
            <person name="Ketchum K.A."/>
            <person name="Lee J.J."/>
            <person name="Ronning C.M."/>
            <person name="Koo H.L."/>
            <person name="Moffat K.S."/>
            <person name="Cronin L.A."/>
            <person name="Shen M."/>
            <person name="Pai G."/>
            <person name="Van Aken S."/>
            <person name="Umayam L."/>
            <person name="Tallon L.J."/>
            <person name="Gill J.E."/>
            <person name="Adams M.D."/>
            <person name="Carrera A.J."/>
            <person name="Creasy T.H."/>
            <person name="Goodman H.M."/>
            <person name="Somerville C.R."/>
            <person name="Copenhaver G.P."/>
            <person name="Preuss D."/>
            <person name="Nierman W.C."/>
            <person name="White O."/>
            <person name="Eisen J.A."/>
            <person name="Salzberg S.L."/>
            <person name="Fraser C.M."/>
            <person name="Venter J.C."/>
        </authorList>
    </citation>
    <scope>NUCLEOTIDE SEQUENCE [LARGE SCALE GENOMIC DNA]</scope>
    <source>
        <strain>cv. Columbia</strain>
    </source>
</reference>
<reference key="2">
    <citation type="journal article" date="2017" name="Plant J.">
        <title>Araport11: a complete reannotation of the Arabidopsis thaliana reference genome.</title>
        <authorList>
            <person name="Cheng C.Y."/>
            <person name="Krishnakumar V."/>
            <person name="Chan A.P."/>
            <person name="Thibaud-Nissen F."/>
            <person name="Schobel S."/>
            <person name="Town C.D."/>
        </authorList>
    </citation>
    <scope>GENOME REANNOTATION</scope>
    <source>
        <strain>cv. Columbia</strain>
    </source>
</reference>
<reference key="3">
    <citation type="submission" date="2004-07" db="EMBL/GenBank/DDBJ databases">
        <title>Arabidopsis ORF clones.</title>
        <authorList>
            <person name="Kim C.J."/>
            <person name="Chen H."/>
            <person name="Cheuk R.F."/>
            <person name="Shinn P."/>
            <person name="Ecker J.R."/>
        </authorList>
    </citation>
    <scope>NUCLEOTIDE SEQUENCE [LARGE SCALE MRNA]</scope>
    <source>
        <strain>cv. Columbia</strain>
    </source>
</reference>
<reference key="4">
    <citation type="journal article" date="2001" name="Plant Physiol.">
        <title>Phylogenetic relationships within cation transporter families of Arabidopsis.</title>
        <authorList>
            <person name="Maeser P."/>
            <person name="Thomine S."/>
            <person name="Schroeder J.I."/>
            <person name="Ward J.M."/>
            <person name="Hirschi K."/>
            <person name="Sze H."/>
            <person name="Talke I.N."/>
            <person name="Amtmann A."/>
            <person name="Maathuis F.J.M."/>
            <person name="Sanders D."/>
            <person name="Harper J.F."/>
            <person name="Tchieu J."/>
            <person name="Gribskov M."/>
            <person name="Persans M.W."/>
            <person name="Salt D.E."/>
            <person name="Kim S.A."/>
            <person name="Guerinot M.L."/>
        </authorList>
    </citation>
    <scope>GENE FAMILY</scope>
    <scope>NOMENCLATURE</scope>
</reference>
<feature type="chain" id="PRO_0000206119" description="Metal tolerance protein B">
    <location>
        <begin position="1"/>
        <end position="375"/>
    </location>
</feature>
<feature type="topological domain" description="Cytoplasmic" evidence="2">
    <location>
        <begin position="1"/>
        <end position="57"/>
    </location>
</feature>
<feature type="transmembrane region" description="Helical" evidence="2">
    <location>
        <begin position="58"/>
        <end position="78"/>
    </location>
</feature>
<feature type="topological domain" description="Vacuolar" evidence="2">
    <location>
        <begin position="79"/>
        <end position="84"/>
    </location>
</feature>
<feature type="transmembrane region" description="Helical" evidence="2">
    <location>
        <begin position="85"/>
        <end position="105"/>
    </location>
</feature>
<feature type="topological domain" description="Cytoplasmic" evidence="2">
    <location>
        <begin position="106"/>
        <end position="122"/>
    </location>
</feature>
<feature type="transmembrane region" description="Helical" evidence="2">
    <location>
        <begin position="123"/>
        <end position="143"/>
    </location>
</feature>
<feature type="topological domain" description="Vacuolar" evidence="2">
    <location>
        <begin position="144"/>
        <end position="160"/>
    </location>
</feature>
<feature type="transmembrane region" description="Helical" evidence="2">
    <location>
        <begin position="161"/>
        <end position="181"/>
    </location>
</feature>
<feature type="topological domain" description="Cytoplasmic" evidence="2">
    <location>
        <begin position="182"/>
        <end position="240"/>
    </location>
</feature>
<feature type="transmembrane region" description="Helical" evidence="2">
    <location>
        <begin position="241"/>
        <end position="261"/>
    </location>
</feature>
<feature type="topological domain" description="Vacuolar" evidence="2">
    <location>
        <begin position="262"/>
        <end position="264"/>
    </location>
</feature>
<feature type="transmembrane region" description="Helical" evidence="2">
    <location>
        <begin position="265"/>
        <end position="285"/>
    </location>
</feature>
<feature type="topological domain" description="Cytoplasmic" evidence="2">
    <location>
        <begin position="286"/>
        <end position="375"/>
    </location>
</feature>
<feature type="region of interest" description="Required for zinc-binding" evidence="1">
    <location>
        <begin position="182"/>
        <end position="206"/>
    </location>
</feature>